<sequence>METATLVAISISGSLVSFTGYALYTAFGQPSQQLRDPFEEHGD</sequence>
<dbReference type="EMBL" id="AY007466">
    <property type="protein sequence ID" value="AAG12377.1"/>
    <property type="molecule type" value="Genomic_DNA"/>
</dbReference>
<dbReference type="RefSeq" id="YP_010368747.1">
    <property type="nucleotide sequence ID" value="NC_062926.1"/>
</dbReference>
<dbReference type="SMR" id="Q8HS28"/>
<dbReference type="GeneID" id="71949726"/>
<dbReference type="GO" id="GO:0009535">
    <property type="term" value="C:chloroplast thylakoid membrane"/>
    <property type="evidence" value="ECO:0007669"/>
    <property type="project" value="UniProtKB-SubCell"/>
</dbReference>
<dbReference type="GO" id="GO:0015979">
    <property type="term" value="P:photosynthesis"/>
    <property type="evidence" value="ECO:0007669"/>
    <property type="project" value="InterPro"/>
</dbReference>
<dbReference type="HAMAP" id="MF_00293">
    <property type="entry name" value="PSII_PsbN"/>
    <property type="match status" value="1"/>
</dbReference>
<dbReference type="InterPro" id="IPR003398">
    <property type="entry name" value="PSII_PsbN"/>
</dbReference>
<dbReference type="PANTHER" id="PTHR35326">
    <property type="entry name" value="PROTEIN PSBN"/>
    <property type="match status" value="1"/>
</dbReference>
<dbReference type="PANTHER" id="PTHR35326:SF3">
    <property type="entry name" value="PROTEIN PSBN"/>
    <property type="match status" value="1"/>
</dbReference>
<dbReference type="Pfam" id="PF02468">
    <property type="entry name" value="PsbN"/>
    <property type="match status" value="1"/>
</dbReference>
<gene>
    <name evidence="1" type="primary">psbN</name>
</gene>
<keyword id="KW-0150">Chloroplast</keyword>
<keyword id="KW-0472">Membrane</keyword>
<keyword id="KW-0934">Plastid</keyword>
<keyword id="KW-0793">Thylakoid</keyword>
<keyword id="KW-0812">Transmembrane</keyword>
<keyword id="KW-1133">Transmembrane helix</keyword>
<accession>Q8HS28</accession>
<organism>
    <name type="scientific">Magnolia stellata</name>
    <name type="common">Star magnolia</name>
    <name type="synonym">Buergeria stellata</name>
    <dbReference type="NCBI Taxonomy" id="54733"/>
    <lineage>
        <taxon>Eukaryota</taxon>
        <taxon>Viridiplantae</taxon>
        <taxon>Streptophyta</taxon>
        <taxon>Embryophyta</taxon>
        <taxon>Tracheophyta</taxon>
        <taxon>Spermatophyta</taxon>
        <taxon>Magnoliopsida</taxon>
        <taxon>Magnoliidae</taxon>
        <taxon>Magnoliales</taxon>
        <taxon>Magnoliaceae</taxon>
        <taxon>Magnolia</taxon>
    </lineage>
</organism>
<geneLocation type="chloroplast"/>
<feature type="chain" id="PRO_0000207919" description="Protein PsbN">
    <location>
        <begin position="1"/>
        <end position="43"/>
    </location>
</feature>
<feature type="transmembrane region" description="Helical" evidence="1">
    <location>
        <begin position="5"/>
        <end position="27"/>
    </location>
</feature>
<proteinExistence type="inferred from homology"/>
<reference key="1">
    <citation type="submission" date="2000-02" db="EMBL/GenBank/DDBJ databases">
        <title>Long branches in the seed plants and the root of the angiosperms.</title>
        <authorList>
            <person name="Graham S.W."/>
            <person name="Reeves P.A."/>
            <person name="Burns A."/>
            <person name="Olmstead R.G."/>
        </authorList>
    </citation>
    <scope>NUCLEOTIDE SEQUENCE [GENOMIC DNA]</scope>
</reference>
<name>PSBN_MAGST</name>
<evidence type="ECO:0000255" key="1">
    <source>
        <dbReference type="HAMAP-Rule" id="MF_00293"/>
    </source>
</evidence>
<protein>
    <recommendedName>
        <fullName evidence="1">Protein PsbN</fullName>
    </recommendedName>
</protein>
<comment type="function">
    <text evidence="1">May play a role in photosystem I and II biogenesis.</text>
</comment>
<comment type="subcellular location">
    <subcellularLocation>
        <location evidence="1">Plastid</location>
        <location evidence="1">Chloroplast thylakoid membrane</location>
        <topology evidence="1">Single-pass membrane protein</topology>
    </subcellularLocation>
</comment>
<comment type="similarity">
    <text evidence="1">Belongs to the PsbN family.</text>
</comment>
<comment type="caution">
    <text evidence="1">Originally thought to be a component of PSII; based on experiments in Synechocystis, N.tabacum and barley, and its absence from PSII in T.elongatus and T.vulcanus, this is probably not true.</text>
</comment>